<sequence length="661" mass="69678">KVSDSAYSNSCSNSQSQRSGSSKSRLSGSHSSGSSGYGGKPSTQASSSDMIIKRNKDKSRKKKKNKGAGQGAGQAQTLISASTSLEGRDEEKPRPSGTGCVEQQICRELQDQQHGEDHSEPQAAEQLQQEEDQSGSESEADRVEGVAKSEAVQSFPIPSPLSVTIVPPSMGGCGGVGHAAGLDSGLAKFDKTWEAGPGKLESMTGVGAAAAGTGQRGERVKEDSFCCVISMHDGIVLYTTPSITDVLGYPRDMWLGRSFIDFVHLKDRATFASQITTGIPIAESRGSVPKDAKSTFCVMLRRYRGLKSGGFGVIGRPVSYEPFRLGLTFREAPEEARPDNYMVSNGTNMLLVICATPIKSSYKVPDEILSQKSPKFAIRHTATGIISHVDSAAVSALGYLPQDLIGRSIMDFYHHEDLSVMKETYETVMKKGQTAGASFCSKPYRFLIQNGCYVLLETEWTSFVNPWSRKLEFVVGHHRVFQGPKQCNVFEAAPTCKLKISEEAQSRNTRIKEDIVKRLAETVSRPSDTVKQEVSRRCQALASFMETLMDEVSRADLKEGSGGSGSSGNFTTASNIHMSSVTNTSIAGTGGTGTGTGTGTGTGTGTGTGTGTGTGTGTGTGTGTGTGTGTGNGTNSGTTSSSRGGSAAAPPVTLTESLLNK</sequence>
<evidence type="ECO:0000250" key="1"/>
<evidence type="ECO:0000255" key="2"/>
<evidence type="ECO:0000255" key="3">
    <source>
        <dbReference type="PROSITE-ProRule" id="PRU00140"/>
    </source>
</evidence>
<evidence type="ECO:0000256" key="4">
    <source>
        <dbReference type="SAM" id="MobiDB-lite"/>
    </source>
</evidence>
<evidence type="ECO:0000305" key="5"/>
<dbReference type="EMBL" id="L07820">
    <property type="protein sequence ID" value="AAA28774.1"/>
    <property type="molecule type" value="Genomic_DNA"/>
</dbReference>
<dbReference type="EMBL" id="L07822">
    <property type="protein sequence ID" value="AAA28772.1"/>
    <property type="molecule type" value="Genomic_DNA"/>
</dbReference>
<dbReference type="EMBL" id="L07824">
    <property type="protein sequence ID" value="AAA28770.1"/>
    <property type="molecule type" value="Genomic_DNA"/>
</dbReference>
<dbReference type="EMBL" id="L07827">
    <property type="protein sequence ID" value="AAA28767.1"/>
    <property type="molecule type" value="Genomic_DNA"/>
</dbReference>
<dbReference type="EMBL" id="S53297">
    <property type="protein sequence ID" value="AAB25028.2"/>
    <property type="molecule type" value="Genomic_DNA"/>
</dbReference>
<dbReference type="PIR" id="S52944">
    <property type="entry name" value="S52944"/>
</dbReference>
<dbReference type="PIR" id="S52951">
    <property type="entry name" value="S52951"/>
</dbReference>
<dbReference type="SMR" id="Q03354"/>
<dbReference type="EnsemblMetazoa" id="FBtr0202223">
    <property type="protein sequence ID" value="FBpp0200715"/>
    <property type="gene ID" value="FBgn0012799"/>
</dbReference>
<dbReference type="EnsemblMetazoa" id="XM_032724309.1">
    <property type="protein sequence ID" value="XP_032580200.1"/>
    <property type="gene ID" value="LOC6616175"/>
</dbReference>
<dbReference type="EnsemblMetazoa" id="XM_032724310.1">
    <property type="protein sequence ID" value="XP_032580201.1"/>
    <property type="gene ID" value="LOC6616175"/>
</dbReference>
<dbReference type="GO" id="GO:0005634">
    <property type="term" value="C:nucleus"/>
    <property type="evidence" value="ECO:0007669"/>
    <property type="project" value="UniProtKB-SubCell"/>
</dbReference>
<dbReference type="GO" id="GO:0048471">
    <property type="term" value="C:perinuclear region of cytoplasm"/>
    <property type="evidence" value="ECO:0007669"/>
    <property type="project" value="UniProtKB-SubCell"/>
</dbReference>
<dbReference type="GO" id="GO:0000976">
    <property type="term" value="F:transcription cis-regulatory region binding"/>
    <property type="evidence" value="ECO:0007669"/>
    <property type="project" value="TreeGrafter"/>
</dbReference>
<dbReference type="GO" id="GO:0001222">
    <property type="term" value="F:transcription corepressor binding"/>
    <property type="evidence" value="ECO:0007669"/>
    <property type="project" value="TreeGrafter"/>
</dbReference>
<dbReference type="GO" id="GO:0032922">
    <property type="term" value="P:circadian regulation of gene expression"/>
    <property type="evidence" value="ECO:0007669"/>
    <property type="project" value="TreeGrafter"/>
</dbReference>
<dbReference type="GO" id="GO:0043153">
    <property type="term" value="P:entrainment of circadian clock by photoperiod"/>
    <property type="evidence" value="ECO:0007669"/>
    <property type="project" value="TreeGrafter"/>
</dbReference>
<dbReference type="GO" id="GO:0000122">
    <property type="term" value="P:negative regulation of transcription by RNA polymerase II"/>
    <property type="evidence" value="ECO:0007669"/>
    <property type="project" value="TreeGrafter"/>
</dbReference>
<dbReference type="CDD" id="cd00130">
    <property type="entry name" value="PAS"/>
    <property type="match status" value="2"/>
</dbReference>
<dbReference type="FunFam" id="1.20.5.770:FF:000001">
    <property type="entry name" value="Period circadian protein"/>
    <property type="match status" value="1"/>
</dbReference>
<dbReference type="FunFam" id="3.30.450.20:FF:000066">
    <property type="entry name" value="Period circadian protein"/>
    <property type="match status" value="1"/>
</dbReference>
<dbReference type="FunFam" id="3.30.450.20:FF:000072">
    <property type="entry name" value="Period circadian protein"/>
    <property type="match status" value="1"/>
</dbReference>
<dbReference type="Gene3D" id="3.30.450.20">
    <property type="entry name" value="PAS domain"/>
    <property type="match status" value="2"/>
</dbReference>
<dbReference type="Gene3D" id="1.20.5.770">
    <property type="entry name" value="Single helix bin"/>
    <property type="match status" value="1"/>
</dbReference>
<dbReference type="InterPro" id="IPR000014">
    <property type="entry name" value="PAS"/>
</dbReference>
<dbReference type="InterPro" id="IPR035965">
    <property type="entry name" value="PAS-like_dom_sf"/>
</dbReference>
<dbReference type="InterPro" id="IPR013767">
    <property type="entry name" value="PAS_fold"/>
</dbReference>
<dbReference type="InterPro" id="IPR050760">
    <property type="entry name" value="Period_circadian_regulator"/>
</dbReference>
<dbReference type="PANTHER" id="PTHR11269">
    <property type="entry name" value="PERIOD CIRCADIAN PROTEIN"/>
    <property type="match status" value="1"/>
</dbReference>
<dbReference type="PANTHER" id="PTHR11269:SF16">
    <property type="entry name" value="PERIOD CIRCADIAN PROTEIN"/>
    <property type="match status" value="1"/>
</dbReference>
<dbReference type="Pfam" id="PF00989">
    <property type="entry name" value="PAS"/>
    <property type="match status" value="1"/>
</dbReference>
<dbReference type="Pfam" id="PF14598">
    <property type="entry name" value="PAS_11"/>
    <property type="match status" value="1"/>
</dbReference>
<dbReference type="SMART" id="SM00091">
    <property type="entry name" value="PAS"/>
    <property type="match status" value="2"/>
</dbReference>
<dbReference type="SUPFAM" id="SSF55785">
    <property type="entry name" value="PYP-like sensor domain (PAS domain)"/>
    <property type="match status" value="2"/>
</dbReference>
<dbReference type="PROSITE" id="PS50112">
    <property type="entry name" value="PAS"/>
    <property type="match status" value="2"/>
</dbReference>
<organism>
    <name type="scientific">Drosophila sechellia</name>
    <name type="common">Fruit fly</name>
    <dbReference type="NCBI Taxonomy" id="7238"/>
    <lineage>
        <taxon>Eukaryota</taxon>
        <taxon>Metazoa</taxon>
        <taxon>Ecdysozoa</taxon>
        <taxon>Arthropoda</taxon>
        <taxon>Hexapoda</taxon>
        <taxon>Insecta</taxon>
        <taxon>Pterygota</taxon>
        <taxon>Neoptera</taxon>
        <taxon>Endopterygota</taxon>
        <taxon>Diptera</taxon>
        <taxon>Brachycera</taxon>
        <taxon>Muscomorpha</taxon>
        <taxon>Ephydroidea</taxon>
        <taxon>Drosophilidae</taxon>
        <taxon>Drosophila</taxon>
        <taxon>Sophophora</taxon>
    </lineage>
</organism>
<comment type="function">
    <text evidence="1">Essential for biological clock functions. Determines the period length of circadian and ultradian rhythms; an increase in PER dosage leads to shortened circadian rhythms and a decrease leads to lengthened circadian rhythms. Essential for the circadian rhythmicity of locomotor activity, eclosion behavior, and for the rhythmic component of the male courtship song that originates in the thoracic nervous system. The biological cycle depends on the rhythmic formation and nuclear localization of the TIM-PER complex. Light induces the degradation of TIM, which promotes elimination of PER. Nuclear activity of the heterodimer coordinatively regulates PER and TIM transcription through a negative feedback loop. Behaves as a negative element in circadian transcriptional loop. Does not appear to bind DNA, suggesting indirect transcriptional inhibition (By similarity).</text>
</comment>
<comment type="subunit">
    <text evidence="1">Forms a heterodimer with timeless (TIM); the complex then translocates into the nucleus.</text>
</comment>
<comment type="subcellular location">
    <subcellularLocation>
        <location evidence="1">Nucleus</location>
    </subcellularLocation>
    <subcellularLocation>
        <location evidence="1">Cytoplasm</location>
        <location evidence="1">Perinuclear region</location>
    </subcellularLocation>
    <text evidence="1">Nuclear at specific periods of the day. First accumulates in the perinuclear region about one hour before translocation into the nucleus. Interaction with Tim is required for nuclear localization (By similarity).</text>
</comment>
<comment type="domain">
    <text evidence="1">The run of Gly-Thr is implicated in the maintenance of circadian period at different temperatures. Deletion of the repeat leads to a shortening of the courtship song cycle period, and thus could be important for determining features of species-specific mating behavior (By similarity).</text>
</comment>
<comment type="PTM">
    <text evidence="1">Phosphorylated with a circadian rhythmicity, probably by the double-time protein (dbt). Phosphorylation could be implicated in the stability of per monomer and in the formation of heterodimer per-tim (By similarity).</text>
</comment>
<feature type="chain" id="PRO_0000162608" description="Period circadian protein">
    <location>
        <begin position="1" status="less than"/>
        <end position="661" status="greater than"/>
    </location>
</feature>
<feature type="domain" description="PAS 1" evidence="3">
    <location>
        <begin position="223"/>
        <end position="358"/>
    </location>
</feature>
<feature type="domain" description="PAS 2" evidence="3">
    <location>
        <begin position="376"/>
        <end position="482"/>
    </location>
</feature>
<feature type="repeat" description="1">
    <location>
        <begin position="591"/>
        <end position="592"/>
    </location>
</feature>
<feature type="repeat" description="2">
    <location>
        <begin position="593"/>
        <end position="594"/>
    </location>
</feature>
<feature type="repeat" description="3">
    <location>
        <begin position="595"/>
        <end position="596"/>
    </location>
</feature>
<feature type="repeat" description="4">
    <location>
        <begin position="597"/>
        <end position="598"/>
    </location>
</feature>
<feature type="repeat" description="5">
    <location>
        <begin position="599"/>
        <end position="600"/>
    </location>
</feature>
<feature type="repeat" description="6">
    <location>
        <begin position="601"/>
        <end position="602"/>
    </location>
</feature>
<feature type="repeat" description="7">
    <location>
        <begin position="603"/>
        <end position="604"/>
    </location>
</feature>
<feature type="repeat" description="8">
    <location>
        <begin position="605"/>
        <end position="606"/>
    </location>
</feature>
<feature type="repeat" description="9">
    <location>
        <begin position="607"/>
        <end position="608"/>
    </location>
</feature>
<feature type="repeat" description="10">
    <location>
        <begin position="609"/>
        <end position="610"/>
    </location>
</feature>
<feature type="repeat" description="11">
    <location>
        <begin position="611"/>
        <end position="612"/>
    </location>
</feature>
<feature type="repeat" description="12">
    <location>
        <begin position="613"/>
        <end position="614"/>
    </location>
</feature>
<feature type="repeat" description="13">
    <location>
        <begin position="615"/>
        <end position="616"/>
    </location>
</feature>
<feature type="repeat" description="14">
    <location>
        <begin position="617"/>
        <end position="618"/>
    </location>
</feature>
<feature type="repeat" description="15">
    <location>
        <begin position="619"/>
        <end position="620"/>
    </location>
</feature>
<feature type="repeat" description="16">
    <location>
        <begin position="621"/>
        <end position="622"/>
    </location>
</feature>
<feature type="repeat" description="17">
    <location>
        <begin position="623"/>
        <end position="624"/>
    </location>
</feature>
<feature type="repeat" description="18">
    <location>
        <begin position="625"/>
        <end position="626"/>
    </location>
</feature>
<feature type="repeat" description="19">
    <location>
        <begin position="627"/>
        <end position="628"/>
    </location>
</feature>
<feature type="repeat" description="20">
    <location>
        <begin position="629"/>
        <end position="630"/>
    </location>
</feature>
<feature type="repeat" description="21">
    <location>
        <begin position="631"/>
        <end position="632"/>
    </location>
</feature>
<feature type="repeat" description="22">
    <location>
        <begin position="633"/>
        <end position="634"/>
    </location>
</feature>
<feature type="repeat" description="23; approximate">
    <location>
        <begin position="635"/>
        <end position="636"/>
    </location>
</feature>
<feature type="repeat" description="24">
    <location>
        <begin position="637"/>
        <end position="638"/>
    </location>
</feature>
<feature type="region of interest" description="Disordered" evidence="4">
    <location>
        <begin position="1"/>
        <end position="151"/>
    </location>
</feature>
<feature type="region of interest" description="Disordered" evidence="4">
    <location>
        <begin position="582"/>
        <end position="661"/>
    </location>
</feature>
<feature type="region of interest" description="24 X 2 AA approximate tandem repeats of G-[TN]">
    <location>
        <begin position="591"/>
        <end position="638"/>
    </location>
</feature>
<feature type="short sequence motif" description="Nuclear localization signal" evidence="2">
    <location>
        <begin position="53"/>
        <end position="66"/>
    </location>
</feature>
<feature type="compositionally biased region" description="Low complexity" evidence="4">
    <location>
        <begin position="1"/>
        <end position="34"/>
    </location>
</feature>
<feature type="compositionally biased region" description="Basic residues" evidence="4">
    <location>
        <begin position="53"/>
        <end position="66"/>
    </location>
</feature>
<feature type="compositionally biased region" description="Basic and acidic residues" evidence="4">
    <location>
        <begin position="108"/>
        <end position="120"/>
    </location>
</feature>
<feature type="compositionally biased region" description="Gly residues" evidence="4">
    <location>
        <begin position="588"/>
        <end position="634"/>
    </location>
</feature>
<feature type="compositionally biased region" description="Low complexity" evidence="4">
    <location>
        <begin position="635"/>
        <end position="646"/>
    </location>
</feature>
<feature type="sequence variant" description="In clone SE-P4.">
    <original>L</original>
    <variation>M</variation>
    <location>
        <position position="85"/>
    </location>
</feature>
<feature type="non-consecutive residues" evidence="5">
    <location>
        <begin position="558"/>
        <end position="559"/>
    </location>
</feature>
<feature type="non-terminal residue">
    <location>
        <position position="1"/>
    </location>
</feature>
<feature type="non-terminal residue">
    <location>
        <position position="661"/>
    </location>
</feature>
<protein>
    <recommendedName>
        <fullName>Period circadian protein</fullName>
    </recommendedName>
</protein>
<accession>Q03354</accession>
<accession>Q26285</accession>
<gene>
    <name type="primary">per</name>
</gene>
<name>PER_DROSE</name>
<proteinExistence type="inferred from homology"/>
<keyword id="KW-0090">Biological rhythms</keyword>
<keyword id="KW-0963">Cytoplasm</keyword>
<keyword id="KW-0539">Nucleus</keyword>
<keyword id="KW-0597">Phosphoprotein</keyword>
<keyword id="KW-0677">Repeat</keyword>
<reference key="1">
    <citation type="journal article" date="1993" name="Genetics">
        <title>DNA sequence variation at the period locus within and among species of the Drosophila melanogaster complex.</title>
        <authorList>
            <person name="Kliman R.M."/>
            <person name="Hey J."/>
        </authorList>
    </citation>
    <scope>NUCLEOTIDE SEQUENCE [GENOMIC DNA] OF 1-558</scope>
</reference>
<reference key="2">
    <citation type="journal article" date="1992" name="J. Mol. Evol.">
        <title>Evolution of the threonine-glycine repeat region of the period gene in the melanogaster species subgroup of Drosophila.</title>
        <authorList>
            <person name="Peixoto A.A."/>
            <person name="Costa R."/>
            <person name="Wheeler D.A."/>
            <person name="Hall J.C."/>
            <person name="Kyriacou C.P."/>
        </authorList>
    </citation>
    <scope>NUCLEOTIDE SEQUENCE [GENOMIC DNA] OF 559-661</scope>
</reference>